<name>MSCL_BACC4</name>
<evidence type="ECO:0000255" key="1">
    <source>
        <dbReference type="HAMAP-Rule" id="MF_00115"/>
    </source>
</evidence>
<accession>B7H732</accession>
<proteinExistence type="inferred from homology"/>
<comment type="function">
    <text evidence="1">Channel that opens in response to stretch forces in the membrane lipid bilayer. May participate in the regulation of osmotic pressure changes within the cell.</text>
</comment>
<comment type="subunit">
    <text evidence="1">Homopentamer.</text>
</comment>
<comment type="subcellular location">
    <subcellularLocation>
        <location evidence="1">Cell membrane</location>
        <topology evidence="1">Multi-pass membrane protein</topology>
    </subcellularLocation>
</comment>
<comment type="similarity">
    <text evidence="1">Belongs to the MscL family.</text>
</comment>
<dbReference type="EMBL" id="CP001176">
    <property type="protein sequence ID" value="ACK62845.1"/>
    <property type="molecule type" value="Genomic_DNA"/>
</dbReference>
<dbReference type="RefSeq" id="WP_000267011.1">
    <property type="nucleotide sequence ID" value="NZ_VEHB01000005.1"/>
</dbReference>
<dbReference type="SMR" id="B7H732"/>
<dbReference type="KEGG" id="bcb:BCB4264_A4785"/>
<dbReference type="HOGENOM" id="CLU_095787_0_0_9"/>
<dbReference type="Proteomes" id="UP000007096">
    <property type="component" value="Chromosome"/>
</dbReference>
<dbReference type="GO" id="GO:0005886">
    <property type="term" value="C:plasma membrane"/>
    <property type="evidence" value="ECO:0007669"/>
    <property type="project" value="UniProtKB-SubCell"/>
</dbReference>
<dbReference type="GO" id="GO:0008381">
    <property type="term" value="F:mechanosensitive monoatomic ion channel activity"/>
    <property type="evidence" value="ECO:0007669"/>
    <property type="project" value="UniProtKB-UniRule"/>
</dbReference>
<dbReference type="FunFam" id="1.10.1200.120:FF:000001">
    <property type="entry name" value="Large-conductance mechanosensitive channel"/>
    <property type="match status" value="1"/>
</dbReference>
<dbReference type="Gene3D" id="1.10.1200.120">
    <property type="entry name" value="Large-conductance mechanosensitive channel, MscL, domain 1"/>
    <property type="match status" value="1"/>
</dbReference>
<dbReference type="HAMAP" id="MF_00115">
    <property type="entry name" value="MscL"/>
    <property type="match status" value="1"/>
</dbReference>
<dbReference type="InterPro" id="IPR019823">
    <property type="entry name" value="Mechanosensitive_channel_CS"/>
</dbReference>
<dbReference type="InterPro" id="IPR001185">
    <property type="entry name" value="MS_channel"/>
</dbReference>
<dbReference type="InterPro" id="IPR037673">
    <property type="entry name" value="MSC/AndL"/>
</dbReference>
<dbReference type="InterPro" id="IPR036019">
    <property type="entry name" value="MscL_channel"/>
</dbReference>
<dbReference type="NCBIfam" id="TIGR00220">
    <property type="entry name" value="mscL"/>
    <property type="match status" value="1"/>
</dbReference>
<dbReference type="NCBIfam" id="NF001843">
    <property type="entry name" value="PRK00567.1-4"/>
    <property type="match status" value="1"/>
</dbReference>
<dbReference type="NCBIfam" id="NF010560">
    <property type="entry name" value="PRK13955.1"/>
    <property type="match status" value="1"/>
</dbReference>
<dbReference type="PANTHER" id="PTHR30266:SF2">
    <property type="entry name" value="LARGE-CONDUCTANCE MECHANOSENSITIVE CHANNEL"/>
    <property type="match status" value="1"/>
</dbReference>
<dbReference type="PANTHER" id="PTHR30266">
    <property type="entry name" value="MECHANOSENSITIVE CHANNEL MSCL"/>
    <property type="match status" value="1"/>
</dbReference>
<dbReference type="Pfam" id="PF01741">
    <property type="entry name" value="MscL"/>
    <property type="match status" value="1"/>
</dbReference>
<dbReference type="PRINTS" id="PR01264">
    <property type="entry name" value="MECHCHANNEL"/>
</dbReference>
<dbReference type="SUPFAM" id="SSF81330">
    <property type="entry name" value="Gated mechanosensitive channel"/>
    <property type="match status" value="1"/>
</dbReference>
<dbReference type="PROSITE" id="PS01327">
    <property type="entry name" value="MSCL"/>
    <property type="match status" value="1"/>
</dbReference>
<sequence length="132" mass="14742">MWNEFKKFAFKGNVVDLAVGVVIGAAFGKIVSSLVKDIITPLLGMVLGGVDFTSLHFGYGKSAVMYGNFIQTIFDFLIIAASIFMFVKVFNKLTSKKEEEKEEEIPEPTKEEELLGEIRDLLKQQNSSKDRA</sequence>
<reference key="1">
    <citation type="submission" date="2008-10" db="EMBL/GenBank/DDBJ databases">
        <title>Genome sequence of Bacillus cereus B4264.</title>
        <authorList>
            <person name="Dodson R.J."/>
            <person name="Durkin A.S."/>
            <person name="Rosovitz M.J."/>
            <person name="Rasko D.A."/>
            <person name="Hoffmaster A."/>
            <person name="Ravel J."/>
            <person name="Sutton G."/>
        </authorList>
    </citation>
    <scope>NUCLEOTIDE SEQUENCE [LARGE SCALE GENOMIC DNA]</scope>
    <source>
        <strain>B4264</strain>
    </source>
</reference>
<keyword id="KW-1003">Cell membrane</keyword>
<keyword id="KW-0407">Ion channel</keyword>
<keyword id="KW-0406">Ion transport</keyword>
<keyword id="KW-0472">Membrane</keyword>
<keyword id="KW-0812">Transmembrane</keyword>
<keyword id="KW-1133">Transmembrane helix</keyword>
<keyword id="KW-0813">Transport</keyword>
<feature type="chain" id="PRO_1000191353" description="Large-conductance mechanosensitive channel">
    <location>
        <begin position="1"/>
        <end position="132"/>
    </location>
</feature>
<feature type="transmembrane region" description="Helical" evidence="1">
    <location>
        <begin position="14"/>
        <end position="34"/>
    </location>
</feature>
<feature type="transmembrane region" description="Helical" evidence="1">
    <location>
        <begin position="38"/>
        <end position="58"/>
    </location>
</feature>
<feature type="transmembrane region" description="Helical" evidence="1">
    <location>
        <begin position="67"/>
        <end position="87"/>
    </location>
</feature>
<organism>
    <name type="scientific">Bacillus cereus (strain B4264)</name>
    <dbReference type="NCBI Taxonomy" id="405532"/>
    <lineage>
        <taxon>Bacteria</taxon>
        <taxon>Bacillati</taxon>
        <taxon>Bacillota</taxon>
        <taxon>Bacilli</taxon>
        <taxon>Bacillales</taxon>
        <taxon>Bacillaceae</taxon>
        <taxon>Bacillus</taxon>
        <taxon>Bacillus cereus group</taxon>
    </lineage>
</organism>
<gene>
    <name evidence="1" type="primary">mscL</name>
    <name type="ordered locus">BCB4264_A4785</name>
</gene>
<protein>
    <recommendedName>
        <fullName evidence="1">Large-conductance mechanosensitive channel</fullName>
    </recommendedName>
</protein>